<protein>
    <recommendedName>
        <fullName>Pleckstrin homology-like domain family A member 3</fullName>
    </recommendedName>
    <alternativeName>
        <fullName>TDAG51/Ipl homolog 1</fullName>
    </alternativeName>
</protein>
<sequence length="125" mass="13735">MTAAATVLKEGVLEKRSGGLLQLWKRKRCVLTERGLQLFEAKGTGGRPKELSFSRIKAVECVESTGRHIYFTLVTEGGGEIDFRCPLEDPGWNAQITLGLVKFKNQQAIQTVRARQSLGTGTLVS</sequence>
<proteinExistence type="evidence at transcript level"/>
<organism>
    <name type="scientific">Rattus norvegicus</name>
    <name type="common">Rat</name>
    <dbReference type="NCBI Taxonomy" id="10116"/>
    <lineage>
        <taxon>Eukaryota</taxon>
        <taxon>Metazoa</taxon>
        <taxon>Chordata</taxon>
        <taxon>Craniata</taxon>
        <taxon>Vertebrata</taxon>
        <taxon>Euteleostomi</taxon>
        <taxon>Mammalia</taxon>
        <taxon>Eutheria</taxon>
        <taxon>Euarchontoglires</taxon>
        <taxon>Glires</taxon>
        <taxon>Rodentia</taxon>
        <taxon>Myomorpha</taxon>
        <taxon>Muroidea</taxon>
        <taxon>Muridae</taxon>
        <taxon>Murinae</taxon>
        <taxon>Rattus</taxon>
    </lineage>
</organism>
<accession>Q5PQT7</accession>
<comment type="function">
    <text evidence="1">p53/TP53-regulated repressor of Akt/AKT1 signaling. Represses AKT1 by preventing AKT1-binding to membrane lipids, thereby inhibiting AKT1 translocation to the cellular membrane and activation. Contributes to p53/TP53-dependent apoptosis by repressing AKT1 activity. Its direct transcription regulation by p53/TP53 may explain how p53/TP53 can negatively regulate AKT1. May act as a tumor suppressor (By similarity).</text>
</comment>
<comment type="subcellular location">
    <subcellularLocation>
        <location evidence="1">Cytoplasm</location>
    </subcellularLocation>
    <subcellularLocation>
        <location evidence="1">Membrane</location>
        <topology evidence="1">Peripheral membrane protein</topology>
    </subcellularLocation>
</comment>
<comment type="domain">
    <text evidence="1">The PH domain binds phosphoinositides with a broad specificity. It competes with the PH domain of AKT1 and directly interferes with AKT1 binding to phosphatidylinositol 4,5-bisphosphate (PIP2) and phosphatidylinositol 3,4,5-trisphosphate (PIP3), preventing AKT1 association to membrane lipids and subsequent activation of AKT1 signaling (By similarity).</text>
</comment>
<comment type="similarity">
    <text evidence="2">Belongs to the PHLDA3 family.</text>
</comment>
<evidence type="ECO:0000250" key="1"/>
<evidence type="ECO:0000305" key="2"/>
<keyword id="KW-0053">Apoptosis</keyword>
<keyword id="KW-0963">Cytoplasm</keyword>
<keyword id="KW-0472">Membrane</keyword>
<keyword id="KW-1185">Reference proteome</keyword>
<keyword id="KW-0043">Tumor suppressor</keyword>
<dbReference type="EMBL" id="BC087038">
    <property type="protein sequence ID" value="AAH87038.1"/>
    <property type="molecule type" value="mRNA"/>
</dbReference>
<dbReference type="RefSeq" id="NP_001012206.1">
    <property type="nucleotide sequence ID" value="NM_001012206.2"/>
</dbReference>
<dbReference type="SMR" id="Q5PQT7"/>
<dbReference type="FunCoup" id="Q5PQT7">
    <property type="interactions" value="354"/>
</dbReference>
<dbReference type="STRING" id="10116.ENSRNOP00000011999"/>
<dbReference type="iPTMnet" id="Q5PQT7"/>
<dbReference type="PhosphoSitePlus" id="Q5PQT7"/>
<dbReference type="PaxDb" id="10116-ENSRNOP00000011999"/>
<dbReference type="Ensembl" id="ENSRNOT00000011999.6">
    <property type="protein sequence ID" value="ENSRNOP00000011999.3"/>
    <property type="gene ID" value="ENSRNOG00000009068.6"/>
</dbReference>
<dbReference type="GeneID" id="363989"/>
<dbReference type="KEGG" id="rno:363989"/>
<dbReference type="UCSC" id="RGD:1310502">
    <property type="organism name" value="rat"/>
</dbReference>
<dbReference type="AGR" id="RGD:1310502"/>
<dbReference type="CTD" id="23612"/>
<dbReference type="RGD" id="1310502">
    <property type="gene designation" value="Phlda3"/>
</dbReference>
<dbReference type="eggNOG" id="ENOG502S2UN">
    <property type="taxonomic scope" value="Eukaryota"/>
</dbReference>
<dbReference type="GeneTree" id="ENSGT00440000039564"/>
<dbReference type="HOGENOM" id="CLU_062639_1_0_1"/>
<dbReference type="InParanoid" id="Q5PQT7"/>
<dbReference type="OMA" id="PSWNADI"/>
<dbReference type="OrthoDB" id="9630709at2759"/>
<dbReference type="PhylomeDB" id="Q5PQT7"/>
<dbReference type="TreeFam" id="TF332320"/>
<dbReference type="PRO" id="PR:Q5PQT7"/>
<dbReference type="Proteomes" id="UP000002494">
    <property type="component" value="Chromosome 13"/>
</dbReference>
<dbReference type="Bgee" id="ENSRNOG00000009068">
    <property type="expression patterns" value="Expressed in esophagus and 19 other cell types or tissues"/>
</dbReference>
<dbReference type="GO" id="GO:0005737">
    <property type="term" value="C:cytoplasm"/>
    <property type="evidence" value="ECO:0007669"/>
    <property type="project" value="UniProtKB-SubCell"/>
</dbReference>
<dbReference type="GO" id="GO:0005886">
    <property type="term" value="C:plasma membrane"/>
    <property type="evidence" value="ECO:0000250"/>
    <property type="project" value="UniProtKB"/>
</dbReference>
<dbReference type="GO" id="GO:0005547">
    <property type="term" value="F:phosphatidylinositol-3,4,5-trisphosphate binding"/>
    <property type="evidence" value="ECO:0000250"/>
    <property type="project" value="UniProtKB"/>
</dbReference>
<dbReference type="GO" id="GO:0043325">
    <property type="term" value="F:phosphatidylinositol-3,4-bisphosphate binding"/>
    <property type="evidence" value="ECO:0000250"/>
    <property type="project" value="UniProtKB"/>
</dbReference>
<dbReference type="GO" id="GO:0080025">
    <property type="term" value="F:phosphatidylinositol-3,5-bisphosphate binding"/>
    <property type="evidence" value="ECO:0000250"/>
    <property type="project" value="UniProtKB"/>
</dbReference>
<dbReference type="GO" id="GO:0032266">
    <property type="term" value="F:phosphatidylinositol-3-phosphate binding"/>
    <property type="evidence" value="ECO:0000250"/>
    <property type="project" value="UniProtKB"/>
</dbReference>
<dbReference type="GO" id="GO:0005546">
    <property type="term" value="F:phosphatidylinositol-4,5-bisphosphate binding"/>
    <property type="evidence" value="ECO:0000250"/>
    <property type="project" value="UniProtKB"/>
</dbReference>
<dbReference type="GO" id="GO:0010314">
    <property type="term" value="F:phosphatidylinositol-5-phosphate binding"/>
    <property type="evidence" value="ECO:0000250"/>
    <property type="project" value="UniProtKB"/>
</dbReference>
<dbReference type="GO" id="GO:0042771">
    <property type="term" value="P:intrinsic apoptotic signaling pathway in response to DNA damage by p53 class mediator"/>
    <property type="evidence" value="ECO:0000250"/>
    <property type="project" value="UniProtKB"/>
</dbReference>
<dbReference type="GO" id="GO:0051898">
    <property type="term" value="P:negative regulation of phosphatidylinositol 3-kinase/protein kinase B signal transduction"/>
    <property type="evidence" value="ECO:0000250"/>
    <property type="project" value="UniProtKB"/>
</dbReference>
<dbReference type="GO" id="GO:0043065">
    <property type="term" value="P:positive regulation of apoptotic process"/>
    <property type="evidence" value="ECO:0000250"/>
    <property type="project" value="UniProtKB"/>
</dbReference>
<dbReference type="CDD" id="cd00821">
    <property type="entry name" value="PH"/>
    <property type="match status" value="1"/>
</dbReference>
<dbReference type="FunFam" id="2.30.29.30:FF:000270">
    <property type="entry name" value="Pleckstrin homology-like domain family A member 3"/>
    <property type="match status" value="1"/>
</dbReference>
<dbReference type="Gene3D" id="2.30.29.30">
    <property type="entry name" value="Pleckstrin-homology domain (PH domain)/Phosphotyrosine-binding domain (PTB)"/>
    <property type="match status" value="1"/>
</dbReference>
<dbReference type="InterPro" id="IPR011993">
    <property type="entry name" value="PH-like_dom_sf"/>
</dbReference>
<dbReference type="InterPro" id="IPR001849">
    <property type="entry name" value="PH_domain"/>
</dbReference>
<dbReference type="InterPro" id="IPR042832">
    <property type="entry name" value="PHLA1/2/3"/>
</dbReference>
<dbReference type="PANTHER" id="PTHR15478:SF5">
    <property type="entry name" value="PLECKSTRIN HOMOLOGY-LIKE DOMAIN FAMILY A MEMBER 3"/>
    <property type="match status" value="1"/>
</dbReference>
<dbReference type="PANTHER" id="PTHR15478">
    <property type="entry name" value="PLECKSTRIN HOMOLOGY-LIKE DOMAIN, PQ-RICH PROTEIN"/>
    <property type="match status" value="1"/>
</dbReference>
<dbReference type="Pfam" id="PF00169">
    <property type="entry name" value="PH"/>
    <property type="match status" value="1"/>
</dbReference>
<dbReference type="SMART" id="SM00233">
    <property type="entry name" value="PH"/>
    <property type="match status" value="1"/>
</dbReference>
<dbReference type="SUPFAM" id="SSF50729">
    <property type="entry name" value="PH domain-like"/>
    <property type="match status" value="1"/>
</dbReference>
<name>PHLA3_RAT</name>
<gene>
    <name type="primary">Phlda3</name>
    <name type="synonym">Tih1</name>
</gene>
<feature type="chain" id="PRO_0000053904" description="Pleckstrin homology-like domain family A member 3">
    <location>
        <begin position="1"/>
        <end position="125"/>
    </location>
</feature>
<feature type="domain" description="PH">
    <location>
        <begin position="6"/>
        <end position="125"/>
    </location>
</feature>
<reference key="1">
    <citation type="journal article" date="2004" name="Genome Res.">
        <title>The status, quality, and expansion of the NIH full-length cDNA project: the Mammalian Gene Collection (MGC).</title>
        <authorList>
            <consortium name="The MGC Project Team"/>
        </authorList>
    </citation>
    <scope>NUCLEOTIDE SEQUENCE [LARGE SCALE MRNA]</scope>
    <source>
        <tissue>Lung</tissue>
    </source>
</reference>